<feature type="chain" id="PRO_0000231690" description="Bifunctional uridylyltransferase/uridylyl-removing enzyme">
    <location>
        <begin position="1"/>
        <end position="930"/>
    </location>
</feature>
<feature type="domain" description="HD" evidence="2">
    <location>
        <begin position="504"/>
        <end position="626"/>
    </location>
</feature>
<feature type="domain" description="ACT 1" evidence="1">
    <location>
        <begin position="742"/>
        <end position="818"/>
    </location>
</feature>
<feature type="domain" description="ACT 2" evidence="1">
    <location>
        <begin position="852"/>
        <end position="927"/>
    </location>
</feature>
<feature type="region of interest" description="Uridylyltransferase">
    <location>
        <begin position="1"/>
        <end position="387"/>
    </location>
</feature>
<feature type="region of interest" description="Uridylyl-removing">
    <location>
        <begin position="388"/>
        <end position="741"/>
    </location>
</feature>
<proteinExistence type="inferred from homology"/>
<comment type="function">
    <text evidence="1">Modifies, by uridylylation and deuridylylation, the PII regulatory proteins (GlnB and homologs), in response to the nitrogen status of the cell that GlnD senses through the glutamine level. Under low glutamine levels, catalyzes the conversion of the PII proteins and UTP to PII-UMP and PPi, while under higher glutamine levels, GlnD hydrolyzes PII-UMP to PII and UMP (deuridylylation). Thus, controls uridylylation state and activity of the PII proteins, and plays an important role in the regulation of nitrogen fixation and metabolism.</text>
</comment>
<comment type="catalytic activity">
    <reaction evidence="1">
        <text>[protein-PII]-L-tyrosine + UTP = [protein-PII]-uridylyl-L-tyrosine + diphosphate</text>
        <dbReference type="Rhea" id="RHEA:13673"/>
        <dbReference type="Rhea" id="RHEA-COMP:12147"/>
        <dbReference type="Rhea" id="RHEA-COMP:12148"/>
        <dbReference type="ChEBI" id="CHEBI:33019"/>
        <dbReference type="ChEBI" id="CHEBI:46398"/>
        <dbReference type="ChEBI" id="CHEBI:46858"/>
        <dbReference type="ChEBI" id="CHEBI:90602"/>
        <dbReference type="EC" id="2.7.7.59"/>
    </reaction>
</comment>
<comment type="catalytic activity">
    <reaction evidence="1">
        <text>[protein-PII]-uridylyl-L-tyrosine + H2O = [protein-PII]-L-tyrosine + UMP + H(+)</text>
        <dbReference type="Rhea" id="RHEA:48600"/>
        <dbReference type="Rhea" id="RHEA-COMP:12147"/>
        <dbReference type="Rhea" id="RHEA-COMP:12148"/>
        <dbReference type="ChEBI" id="CHEBI:15377"/>
        <dbReference type="ChEBI" id="CHEBI:15378"/>
        <dbReference type="ChEBI" id="CHEBI:46858"/>
        <dbReference type="ChEBI" id="CHEBI:57865"/>
        <dbReference type="ChEBI" id="CHEBI:90602"/>
    </reaction>
</comment>
<comment type="cofactor">
    <cofactor evidence="1">
        <name>Mg(2+)</name>
        <dbReference type="ChEBI" id="CHEBI:18420"/>
    </cofactor>
</comment>
<comment type="activity regulation">
    <text evidence="1">Uridylyltransferase (UTase) activity is inhibited by glutamine, while glutamine activates uridylyl-removing (UR) activity.</text>
</comment>
<comment type="domain">
    <text evidence="1">Has four distinct domains: an N-terminal nucleotidyltransferase (NT) domain responsible for UTase activity, a central HD domain that encodes UR activity, and two C-terminal ACT domains that seem to have a role in glutamine sensing.</text>
</comment>
<comment type="similarity">
    <text evidence="1">Belongs to the GlnD family.</text>
</comment>
<accession>Q3J5H6</accession>
<dbReference type="EC" id="2.7.7.59" evidence="1"/>
<dbReference type="EC" id="3.1.4.-" evidence="1"/>
<dbReference type="EMBL" id="CP000143">
    <property type="protein sequence ID" value="ABA77958.1"/>
    <property type="molecule type" value="Genomic_DNA"/>
</dbReference>
<dbReference type="RefSeq" id="WP_011337000.1">
    <property type="nucleotide sequence ID" value="NZ_CP030271.1"/>
</dbReference>
<dbReference type="RefSeq" id="YP_351859.1">
    <property type="nucleotide sequence ID" value="NC_007493.2"/>
</dbReference>
<dbReference type="SMR" id="Q3J5H6"/>
<dbReference type="STRING" id="272943.RSP_1811"/>
<dbReference type="EnsemblBacteria" id="ABA77958">
    <property type="protein sequence ID" value="ABA77958"/>
    <property type="gene ID" value="RSP_1811"/>
</dbReference>
<dbReference type="GeneID" id="3719057"/>
<dbReference type="KEGG" id="rsp:RSP_1811"/>
<dbReference type="PATRIC" id="fig|272943.9.peg.694"/>
<dbReference type="eggNOG" id="COG2844">
    <property type="taxonomic scope" value="Bacteria"/>
</dbReference>
<dbReference type="OrthoDB" id="9758038at2"/>
<dbReference type="PhylomeDB" id="Q3J5H6"/>
<dbReference type="Proteomes" id="UP000002703">
    <property type="component" value="Chromosome 1"/>
</dbReference>
<dbReference type="GO" id="GO:0008773">
    <property type="term" value="F:[protein-PII] uridylyltransferase activity"/>
    <property type="evidence" value="ECO:0007669"/>
    <property type="project" value="UniProtKB-UniRule"/>
</dbReference>
<dbReference type="GO" id="GO:0008081">
    <property type="term" value="F:phosphoric diester hydrolase activity"/>
    <property type="evidence" value="ECO:0007669"/>
    <property type="project" value="UniProtKB-UniRule"/>
</dbReference>
<dbReference type="GO" id="GO:0009399">
    <property type="term" value="P:nitrogen fixation"/>
    <property type="evidence" value="ECO:0007669"/>
    <property type="project" value="UniProtKB-UniRule"/>
</dbReference>
<dbReference type="GO" id="GO:0006808">
    <property type="term" value="P:regulation of nitrogen utilization"/>
    <property type="evidence" value="ECO:0007669"/>
    <property type="project" value="UniProtKB-UniRule"/>
</dbReference>
<dbReference type="CDD" id="cd04899">
    <property type="entry name" value="ACT_ACR-UUR-like_2"/>
    <property type="match status" value="1"/>
</dbReference>
<dbReference type="CDD" id="cd04900">
    <property type="entry name" value="ACT_UUR-like_1"/>
    <property type="match status" value="1"/>
</dbReference>
<dbReference type="CDD" id="cd00077">
    <property type="entry name" value="HDc"/>
    <property type="match status" value="1"/>
</dbReference>
<dbReference type="CDD" id="cd05401">
    <property type="entry name" value="NT_GlnE_GlnD_like"/>
    <property type="match status" value="1"/>
</dbReference>
<dbReference type="Gene3D" id="3.30.70.260">
    <property type="match status" value="1"/>
</dbReference>
<dbReference type="Gene3D" id="3.30.460.10">
    <property type="entry name" value="Beta Polymerase, domain 2"/>
    <property type="match status" value="1"/>
</dbReference>
<dbReference type="Gene3D" id="1.10.3090.10">
    <property type="entry name" value="cca-adding enzyme, domain 2"/>
    <property type="match status" value="1"/>
</dbReference>
<dbReference type="Gene3D" id="1.20.120.330">
    <property type="entry name" value="Nucleotidyltransferases domain 2"/>
    <property type="match status" value="1"/>
</dbReference>
<dbReference type="HAMAP" id="MF_00277">
    <property type="entry name" value="PII_uridylyl_transf"/>
    <property type="match status" value="1"/>
</dbReference>
<dbReference type="InterPro" id="IPR045865">
    <property type="entry name" value="ACT-like_dom_sf"/>
</dbReference>
<dbReference type="InterPro" id="IPR002912">
    <property type="entry name" value="ACT_dom"/>
</dbReference>
<dbReference type="InterPro" id="IPR003607">
    <property type="entry name" value="HD/PDEase_dom"/>
</dbReference>
<dbReference type="InterPro" id="IPR006674">
    <property type="entry name" value="HD_domain"/>
</dbReference>
<dbReference type="InterPro" id="IPR043519">
    <property type="entry name" value="NT_sf"/>
</dbReference>
<dbReference type="InterPro" id="IPR013546">
    <property type="entry name" value="PII_UdlTrfase/GS_AdlTrfase"/>
</dbReference>
<dbReference type="InterPro" id="IPR010043">
    <property type="entry name" value="UTase/UR"/>
</dbReference>
<dbReference type="NCBIfam" id="NF003467">
    <property type="entry name" value="PRK05092.1"/>
    <property type="match status" value="1"/>
</dbReference>
<dbReference type="NCBIfam" id="TIGR01693">
    <property type="entry name" value="UTase_glnD"/>
    <property type="match status" value="1"/>
</dbReference>
<dbReference type="PANTHER" id="PTHR47320">
    <property type="entry name" value="BIFUNCTIONAL URIDYLYLTRANSFERASE/URIDYLYL-REMOVING ENZYME"/>
    <property type="match status" value="1"/>
</dbReference>
<dbReference type="PANTHER" id="PTHR47320:SF1">
    <property type="entry name" value="BIFUNCTIONAL URIDYLYLTRANSFERASE_URIDYLYL-REMOVING ENZYME"/>
    <property type="match status" value="1"/>
</dbReference>
<dbReference type="Pfam" id="PF24931">
    <property type="entry name" value="ACT_ACR9_3rd"/>
    <property type="match status" value="1"/>
</dbReference>
<dbReference type="Pfam" id="PF08335">
    <property type="entry name" value="GlnD_UR_UTase"/>
    <property type="match status" value="1"/>
</dbReference>
<dbReference type="Pfam" id="PF01966">
    <property type="entry name" value="HD"/>
    <property type="match status" value="1"/>
</dbReference>
<dbReference type="PIRSF" id="PIRSF006288">
    <property type="entry name" value="PII_uridyltransf"/>
    <property type="match status" value="1"/>
</dbReference>
<dbReference type="SMART" id="SM00471">
    <property type="entry name" value="HDc"/>
    <property type="match status" value="1"/>
</dbReference>
<dbReference type="SUPFAM" id="SSF55021">
    <property type="entry name" value="ACT-like"/>
    <property type="match status" value="2"/>
</dbReference>
<dbReference type="SUPFAM" id="SSF81301">
    <property type="entry name" value="Nucleotidyltransferase"/>
    <property type="match status" value="1"/>
</dbReference>
<dbReference type="SUPFAM" id="SSF81593">
    <property type="entry name" value="Nucleotidyltransferase substrate binding subunit/domain"/>
    <property type="match status" value="1"/>
</dbReference>
<dbReference type="SUPFAM" id="SSF81891">
    <property type="entry name" value="Poly A polymerase C-terminal region-like"/>
    <property type="match status" value="1"/>
</dbReference>
<dbReference type="PROSITE" id="PS51671">
    <property type="entry name" value="ACT"/>
    <property type="match status" value="2"/>
</dbReference>
<dbReference type="PROSITE" id="PS51831">
    <property type="entry name" value="HD"/>
    <property type="match status" value="1"/>
</dbReference>
<gene>
    <name evidence="1" type="primary">glnD</name>
    <name type="ordered locus">RHOS4_03900</name>
    <name type="ORF">RSP_1811</name>
</gene>
<protein>
    <recommendedName>
        <fullName evidence="1">Bifunctional uridylyltransferase/uridylyl-removing enzyme</fullName>
        <shortName evidence="1">UTase/UR</shortName>
    </recommendedName>
    <alternativeName>
        <fullName evidence="1">Bifunctional [protein-PII] modification enzyme</fullName>
    </alternativeName>
    <alternativeName>
        <fullName evidence="1">Bifunctional nitrogen sensor protein</fullName>
    </alternativeName>
    <domain>
        <recommendedName>
            <fullName evidence="1">[Protein-PII] uridylyltransferase</fullName>
            <shortName evidence="1">PII uridylyltransferase</shortName>
            <shortName evidence="1">UTase</shortName>
            <ecNumber evidence="1">2.7.7.59</ecNumber>
        </recommendedName>
    </domain>
    <domain>
        <recommendedName>
            <fullName evidence="1">[Protein-PII]-UMP uridylyl-removing enzyme</fullName>
            <shortName evidence="1">UR</shortName>
            <ecNumber evidence="1">3.1.4.-</ecNumber>
        </recommendedName>
    </domain>
</protein>
<sequence>MAPASEAGPAQDPLFSGLILPRSRILDAEALTRSILAEIDAAGPLDPKSARAIAVRQMTEAKAAGNRALSETFEARPREARGLIRAQAALTDGLVTAALRVACERLHPLANPTEAERIAVLAVGGYGRAEMAPHSDVDLLFLTPWKITPWAEMVIESMLYMLWDLRLKVGHSSRTVKDCLRLGREDITIRTALLEHRFLAGHAPLAAELDETLWNDLFRGTGAEFIDAKLEERGQRHKRQGGQRYVLEPNVKEGKGGLRDLQTLYWIGKYLNRVPSPSGLVAAGLLTRDEFETFERAESFLWAVRCHLHYATGRATDQLTFDLQVEVAARMGYADTRGRRGVEVFMQDYFRHATRVGELTRVFLAQLEARHEKREPKIMGLFRRKKRLKPEYSLVNGRIDVLDPKAFLADKLNLLRIFEEALRTGFLIHPGAMRLIAANLHLIDEEMQHDREANRIFLDMLLRHGNPERALRRMNELGVLGAFIPEFERIVAMMQFNVYHHYTVDEHTIQCISTLAQIERHELDEELPIANRILTDGISRRVIYVALLLHDIGKGRPEDHSILGAQIARRVAPRFGLTAEECETVEWLVRYHLLMSDMAQKRDIGDPRTVRDFAKAVRSKKRLDLLTVLTVCDIRGVGPGTWNNWKAQLLRKLYRDTVTALDAGLESLNRENRADEAKRALRELLEEWDPKDLRAELARHYPPYWQALSNATHAVFARMLRGLGETEIRIDLDPDPDRDATRACFALADHPGIFSRLAGALALVGANVVDARTYTTKDGYATAVFWIQDSEGSPYEISRLPRLTSMIDKTLKGEVVAREALKDRDKLKKREAQFRFPTHIAFDNEGSDIYTIIEVDTRDRPGLLYDLTRTLAANNIYIASAVIATYGAQVVDSFYVKDMFGLKLHQKNRQETLEKKLRQAIVEGAERAKQ</sequence>
<evidence type="ECO:0000255" key="1">
    <source>
        <dbReference type="HAMAP-Rule" id="MF_00277"/>
    </source>
</evidence>
<evidence type="ECO:0000255" key="2">
    <source>
        <dbReference type="PROSITE-ProRule" id="PRU01175"/>
    </source>
</evidence>
<keyword id="KW-0378">Hydrolase</keyword>
<keyword id="KW-0460">Magnesium</keyword>
<keyword id="KW-0511">Multifunctional enzyme</keyword>
<keyword id="KW-0535">Nitrogen fixation</keyword>
<keyword id="KW-0548">Nucleotidyltransferase</keyword>
<keyword id="KW-1185">Reference proteome</keyword>
<keyword id="KW-0677">Repeat</keyword>
<keyword id="KW-0808">Transferase</keyword>
<name>GLND_CERS4</name>
<organism>
    <name type="scientific">Cereibacter sphaeroides (strain ATCC 17023 / DSM 158 / JCM 6121 / CCUG 31486 / LMG 2827 / NBRC 12203 / NCIMB 8253 / ATH 2.4.1.)</name>
    <name type="common">Rhodobacter sphaeroides</name>
    <dbReference type="NCBI Taxonomy" id="272943"/>
    <lineage>
        <taxon>Bacteria</taxon>
        <taxon>Pseudomonadati</taxon>
        <taxon>Pseudomonadota</taxon>
        <taxon>Alphaproteobacteria</taxon>
        <taxon>Rhodobacterales</taxon>
        <taxon>Paracoccaceae</taxon>
        <taxon>Cereibacter</taxon>
    </lineage>
</organism>
<reference key="1">
    <citation type="submission" date="2005-09" db="EMBL/GenBank/DDBJ databases">
        <title>Complete sequence of chromosome 1 of Rhodobacter sphaeroides 2.4.1.</title>
        <authorList>
            <person name="Copeland A."/>
            <person name="Lucas S."/>
            <person name="Lapidus A."/>
            <person name="Barry K."/>
            <person name="Detter J.C."/>
            <person name="Glavina T."/>
            <person name="Hammon N."/>
            <person name="Israni S."/>
            <person name="Pitluck S."/>
            <person name="Richardson P."/>
            <person name="Mackenzie C."/>
            <person name="Choudhary M."/>
            <person name="Larimer F."/>
            <person name="Hauser L.J."/>
            <person name="Land M."/>
            <person name="Donohue T.J."/>
            <person name="Kaplan S."/>
        </authorList>
    </citation>
    <scope>NUCLEOTIDE SEQUENCE [LARGE SCALE GENOMIC DNA]</scope>
    <source>
        <strain>ATCC 17023 / DSM 158 / JCM 6121 / CCUG 31486 / LMG 2827 / NBRC 12203 / NCIMB 8253 / ATH 2.4.1.</strain>
    </source>
</reference>